<evidence type="ECO:0000255" key="1">
    <source>
        <dbReference type="HAMAP-Rule" id="MF_00178"/>
    </source>
</evidence>
<accession>A9KC67</accession>
<sequence>MTESSFKLAIVVSQFNRAVTEKLLNGVLQRLTELDVQANQIKTVWVPGAVEIPLLAKRLAKSKHYQAIVCLGAVIRGETDHYNYVCQQVSFGCQQVALEYEVPIIFGVLTTTTKEQAFARAGGERGNKGADWADAAVSMIKLMKEIEITDE</sequence>
<gene>
    <name evidence="1" type="primary">ribH</name>
    <name type="ordered locus">CBUD_0659</name>
</gene>
<organism>
    <name type="scientific">Coxiella burnetii (strain Dugway 5J108-111)</name>
    <dbReference type="NCBI Taxonomy" id="434922"/>
    <lineage>
        <taxon>Bacteria</taxon>
        <taxon>Pseudomonadati</taxon>
        <taxon>Pseudomonadota</taxon>
        <taxon>Gammaproteobacteria</taxon>
        <taxon>Legionellales</taxon>
        <taxon>Coxiellaceae</taxon>
        <taxon>Coxiella</taxon>
    </lineage>
</organism>
<dbReference type="EC" id="2.5.1.78" evidence="1"/>
<dbReference type="EMBL" id="CP000733">
    <property type="protein sequence ID" value="ABS76924.1"/>
    <property type="molecule type" value="Genomic_DNA"/>
</dbReference>
<dbReference type="RefSeq" id="WP_011996677.1">
    <property type="nucleotide sequence ID" value="NC_009727.1"/>
</dbReference>
<dbReference type="SMR" id="A9KC67"/>
<dbReference type="KEGG" id="cbd:CBUD_0659"/>
<dbReference type="HOGENOM" id="CLU_089358_1_1_6"/>
<dbReference type="UniPathway" id="UPA00275">
    <property type="reaction ID" value="UER00404"/>
</dbReference>
<dbReference type="Proteomes" id="UP000008555">
    <property type="component" value="Chromosome"/>
</dbReference>
<dbReference type="GO" id="GO:0005829">
    <property type="term" value="C:cytosol"/>
    <property type="evidence" value="ECO:0007669"/>
    <property type="project" value="TreeGrafter"/>
</dbReference>
<dbReference type="GO" id="GO:0009349">
    <property type="term" value="C:riboflavin synthase complex"/>
    <property type="evidence" value="ECO:0007669"/>
    <property type="project" value="InterPro"/>
</dbReference>
<dbReference type="GO" id="GO:0000906">
    <property type="term" value="F:6,7-dimethyl-8-ribityllumazine synthase activity"/>
    <property type="evidence" value="ECO:0007669"/>
    <property type="project" value="UniProtKB-UniRule"/>
</dbReference>
<dbReference type="GO" id="GO:0009231">
    <property type="term" value="P:riboflavin biosynthetic process"/>
    <property type="evidence" value="ECO:0007669"/>
    <property type="project" value="UniProtKB-UniRule"/>
</dbReference>
<dbReference type="CDD" id="cd09209">
    <property type="entry name" value="Lumazine_synthase-I"/>
    <property type="match status" value="1"/>
</dbReference>
<dbReference type="FunFam" id="3.40.50.960:FF:000013">
    <property type="entry name" value="6,7-dimethyl-8-ribityllumazine synthase"/>
    <property type="match status" value="1"/>
</dbReference>
<dbReference type="Gene3D" id="3.40.50.960">
    <property type="entry name" value="Lumazine/riboflavin synthase"/>
    <property type="match status" value="1"/>
</dbReference>
<dbReference type="HAMAP" id="MF_00178">
    <property type="entry name" value="Lumazine_synth"/>
    <property type="match status" value="1"/>
</dbReference>
<dbReference type="InterPro" id="IPR034964">
    <property type="entry name" value="LS"/>
</dbReference>
<dbReference type="InterPro" id="IPR002180">
    <property type="entry name" value="LS/RS"/>
</dbReference>
<dbReference type="InterPro" id="IPR036467">
    <property type="entry name" value="LS/RS_sf"/>
</dbReference>
<dbReference type="NCBIfam" id="TIGR00114">
    <property type="entry name" value="lumazine-synth"/>
    <property type="match status" value="1"/>
</dbReference>
<dbReference type="PANTHER" id="PTHR21058:SF0">
    <property type="entry name" value="6,7-DIMETHYL-8-RIBITYLLUMAZINE SYNTHASE"/>
    <property type="match status" value="1"/>
</dbReference>
<dbReference type="PANTHER" id="PTHR21058">
    <property type="entry name" value="6,7-DIMETHYL-8-RIBITYLLUMAZINE SYNTHASE DMRL SYNTHASE LUMAZINE SYNTHASE"/>
    <property type="match status" value="1"/>
</dbReference>
<dbReference type="Pfam" id="PF00885">
    <property type="entry name" value="DMRL_synthase"/>
    <property type="match status" value="1"/>
</dbReference>
<dbReference type="SUPFAM" id="SSF52121">
    <property type="entry name" value="Lumazine synthase"/>
    <property type="match status" value="1"/>
</dbReference>
<feature type="chain" id="PRO_1000077231" description="6,7-dimethyl-8-ribityllumazine synthase">
    <location>
        <begin position="1"/>
        <end position="151"/>
    </location>
</feature>
<feature type="active site" description="Proton donor" evidence="1">
    <location>
        <position position="81"/>
    </location>
</feature>
<feature type="binding site" evidence="1">
    <location>
        <position position="15"/>
    </location>
    <ligand>
        <name>5-amino-6-(D-ribitylamino)uracil</name>
        <dbReference type="ChEBI" id="CHEBI:15934"/>
    </ligand>
</feature>
<feature type="binding site" evidence="1">
    <location>
        <begin position="49"/>
        <end position="51"/>
    </location>
    <ligand>
        <name>5-amino-6-(D-ribitylamino)uracil</name>
        <dbReference type="ChEBI" id="CHEBI:15934"/>
    </ligand>
</feature>
<feature type="binding site" evidence="1">
    <location>
        <begin position="73"/>
        <end position="75"/>
    </location>
    <ligand>
        <name>5-amino-6-(D-ribitylamino)uracil</name>
        <dbReference type="ChEBI" id="CHEBI:15934"/>
    </ligand>
</feature>
<feature type="binding site" evidence="1">
    <location>
        <begin position="78"/>
        <end position="79"/>
    </location>
    <ligand>
        <name>(2S)-2-hydroxy-3-oxobutyl phosphate</name>
        <dbReference type="ChEBI" id="CHEBI:58830"/>
    </ligand>
</feature>
<feature type="binding site" evidence="1">
    <location>
        <position position="106"/>
    </location>
    <ligand>
        <name>5-amino-6-(D-ribitylamino)uracil</name>
        <dbReference type="ChEBI" id="CHEBI:15934"/>
    </ligand>
</feature>
<feature type="binding site" evidence="1">
    <location>
        <position position="120"/>
    </location>
    <ligand>
        <name>(2S)-2-hydroxy-3-oxobutyl phosphate</name>
        <dbReference type="ChEBI" id="CHEBI:58830"/>
    </ligand>
</feature>
<proteinExistence type="inferred from homology"/>
<keyword id="KW-0686">Riboflavin biosynthesis</keyword>
<keyword id="KW-0808">Transferase</keyword>
<name>RISB_COXBN</name>
<protein>
    <recommendedName>
        <fullName evidence="1">6,7-dimethyl-8-ribityllumazine synthase</fullName>
        <shortName evidence="1">DMRL synthase</shortName>
        <shortName evidence="1">LS</shortName>
        <shortName evidence="1">Lumazine synthase</shortName>
        <ecNumber evidence="1">2.5.1.78</ecNumber>
    </recommendedName>
</protein>
<reference key="1">
    <citation type="journal article" date="2009" name="Infect. Immun.">
        <title>Comparative genomics reveal extensive transposon-mediated genomic plasticity and diversity among potential effector proteins within the genus Coxiella.</title>
        <authorList>
            <person name="Beare P.A."/>
            <person name="Unsworth N."/>
            <person name="Andoh M."/>
            <person name="Voth D.E."/>
            <person name="Omsland A."/>
            <person name="Gilk S.D."/>
            <person name="Williams K.P."/>
            <person name="Sobral B.W."/>
            <person name="Kupko J.J. III"/>
            <person name="Porcella S.F."/>
            <person name="Samuel J.E."/>
            <person name="Heinzen R.A."/>
        </authorList>
    </citation>
    <scope>NUCLEOTIDE SEQUENCE [LARGE SCALE GENOMIC DNA]</scope>
    <source>
        <strain>Dugway 5J108-111</strain>
    </source>
</reference>
<comment type="function">
    <text evidence="1">Catalyzes the formation of 6,7-dimethyl-8-ribityllumazine by condensation of 5-amino-6-(D-ribitylamino)uracil with 3,4-dihydroxy-2-butanone 4-phosphate. This is the penultimate step in the biosynthesis of riboflavin.</text>
</comment>
<comment type="catalytic activity">
    <reaction evidence="1">
        <text>(2S)-2-hydroxy-3-oxobutyl phosphate + 5-amino-6-(D-ribitylamino)uracil = 6,7-dimethyl-8-(1-D-ribityl)lumazine + phosphate + 2 H2O + H(+)</text>
        <dbReference type="Rhea" id="RHEA:26152"/>
        <dbReference type="ChEBI" id="CHEBI:15377"/>
        <dbReference type="ChEBI" id="CHEBI:15378"/>
        <dbReference type="ChEBI" id="CHEBI:15934"/>
        <dbReference type="ChEBI" id="CHEBI:43474"/>
        <dbReference type="ChEBI" id="CHEBI:58201"/>
        <dbReference type="ChEBI" id="CHEBI:58830"/>
        <dbReference type="EC" id="2.5.1.78"/>
    </reaction>
</comment>
<comment type="pathway">
    <text evidence="1">Cofactor biosynthesis; riboflavin biosynthesis; riboflavin from 2-hydroxy-3-oxobutyl phosphate and 5-amino-6-(D-ribitylamino)uracil: step 1/2.</text>
</comment>
<comment type="subunit">
    <text evidence="1">Forms an icosahedral capsid composed of 60 subunits, arranged as a dodecamer of pentamers.</text>
</comment>
<comment type="similarity">
    <text evidence="1">Belongs to the DMRL synthase family.</text>
</comment>